<sequence>MRIEQELKLGFKDVLFRPKRSTLKSRSQVNLTRDFTFKHSGRQWSGVPVIAANMDSVGSFEMAKALAEHGVMTAVHKHYTVNDWADFVKSADNATLKNVMVSTGTSDADFQKTKDIMALSDELIFICVDIANGYSEHLVEYVERVRAEFPDKVISAGNVVTGDMCEELILAGADIVKVGIGPGSVCTTRVKTGVGYPQLSAIIECGDAAHGLGGMIIGDGGCSCAGDVSKAFGGGADFVMLGGMLAGHEESGGEIIEKDGETFMKFYGMSSQSAMDKHSGGVAKYRAAEGKTVLLPFRGSVHGTISDILGGVRSTCTYVGAAKLKELTKRTTFIRVQEQENNVFGKEK</sequence>
<feature type="chain" id="PRO_0000093742" description="GMP reductase">
    <location>
        <begin position="1"/>
        <end position="348"/>
    </location>
</feature>
<feature type="active site" description="Thioimidate intermediate" evidence="1">
    <location>
        <position position="186"/>
    </location>
</feature>
<feature type="binding site" evidence="1">
    <location>
        <begin position="108"/>
        <end position="131"/>
    </location>
    <ligand>
        <name>NADP(+)</name>
        <dbReference type="ChEBI" id="CHEBI:58349"/>
    </ligand>
</feature>
<feature type="binding site" evidence="1">
    <location>
        <position position="181"/>
    </location>
    <ligand>
        <name>K(+)</name>
        <dbReference type="ChEBI" id="CHEBI:29103"/>
    </ligand>
</feature>
<feature type="binding site" evidence="1">
    <location>
        <position position="183"/>
    </location>
    <ligand>
        <name>K(+)</name>
        <dbReference type="ChEBI" id="CHEBI:29103"/>
    </ligand>
</feature>
<feature type="binding site" evidence="1">
    <location>
        <begin position="216"/>
        <end position="239"/>
    </location>
    <ligand>
        <name>NADP(+)</name>
        <dbReference type="ChEBI" id="CHEBI:58349"/>
    </ligand>
</feature>
<keyword id="KW-0479">Metal-binding</keyword>
<keyword id="KW-0521">NADP</keyword>
<keyword id="KW-0560">Oxidoreductase</keyword>
<keyword id="KW-0630">Potassium</keyword>
<organism>
    <name type="scientific">Vibrio parahaemolyticus serotype O3:K6 (strain RIMD 2210633)</name>
    <dbReference type="NCBI Taxonomy" id="223926"/>
    <lineage>
        <taxon>Bacteria</taxon>
        <taxon>Pseudomonadati</taxon>
        <taxon>Pseudomonadota</taxon>
        <taxon>Gammaproteobacteria</taxon>
        <taxon>Vibrionales</taxon>
        <taxon>Vibrionaceae</taxon>
        <taxon>Vibrio</taxon>
    </lineage>
</organism>
<evidence type="ECO:0000255" key="1">
    <source>
        <dbReference type="HAMAP-Rule" id="MF_00596"/>
    </source>
</evidence>
<accession>Q87H06</accession>
<proteinExistence type="inferred from homology"/>
<protein>
    <recommendedName>
        <fullName evidence="1">GMP reductase</fullName>
        <ecNumber evidence="1">1.7.1.7</ecNumber>
    </recommendedName>
    <alternativeName>
        <fullName evidence="1">Guanosine 5'-monophosphate oxidoreductase</fullName>
        <shortName evidence="1">Guanosine monophosphate reductase</shortName>
    </alternativeName>
</protein>
<gene>
    <name evidence="1" type="primary">guaC</name>
    <name type="ordered locus">VPA1159</name>
</gene>
<name>GUAC_VIBPA</name>
<reference key="1">
    <citation type="journal article" date="2003" name="Lancet">
        <title>Genome sequence of Vibrio parahaemolyticus: a pathogenic mechanism distinct from that of V. cholerae.</title>
        <authorList>
            <person name="Makino K."/>
            <person name="Oshima K."/>
            <person name="Kurokawa K."/>
            <person name="Yokoyama K."/>
            <person name="Uda T."/>
            <person name="Tagomori K."/>
            <person name="Iijima Y."/>
            <person name="Najima M."/>
            <person name="Nakano M."/>
            <person name="Yamashita A."/>
            <person name="Kubota Y."/>
            <person name="Kimura S."/>
            <person name="Yasunaga T."/>
            <person name="Honda T."/>
            <person name="Shinagawa H."/>
            <person name="Hattori M."/>
            <person name="Iida T."/>
        </authorList>
    </citation>
    <scope>NUCLEOTIDE SEQUENCE [LARGE SCALE GENOMIC DNA]</scope>
    <source>
        <strain>RIMD 2210633</strain>
    </source>
</reference>
<dbReference type="EC" id="1.7.1.7" evidence="1"/>
<dbReference type="EMBL" id="BA000032">
    <property type="protein sequence ID" value="BAC62502.1"/>
    <property type="molecule type" value="Genomic_DNA"/>
</dbReference>
<dbReference type="RefSeq" id="NP_800669.1">
    <property type="nucleotide sequence ID" value="NC_004605.1"/>
</dbReference>
<dbReference type="RefSeq" id="WP_005463577.1">
    <property type="nucleotide sequence ID" value="NC_004605.1"/>
</dbReference>
<dbReference type="SMR" id="Q87H06"/>
<dbReference type="GeneID" id="1191855"/>
<dbReference type="KEGG" id="vpa:VPA1159"/>
<dbReference type="PATRIC" id="fig|223926.6.peg.4084"/>
<dbReference type="eggNOG" id="COG0516">
    <property type="taxonomic scope" value="Bacteria"/>
</dbReference>
<dbReference type="HOGENOM" id="CLU_022552_5_3_6"/>
<dbReference type="Proteomes" id="UP000002493">
    <property type="component" value="Chromosome 2"/>
</dbReference>
<dbReference type="GO" id="GO:0005829">
    <property type="term" value="C:cytosol"/>
    <property type="evidence" value="ECO:0007669"/>
    <property type="project" value="TreeGrafter"/>
</dbReference>
<dbReference type="GO" id="GO:1902560">
    <property type="term" value="C:GMP reductase complex"/>
    <property type="evidence" value="ECO:0007669"/>
    <property type="project" value="InterPro"/>
</dbReference>
<dbReference type="GO" id="GO:0003920">
    <property type="term" value="F:GMP reductase activity"/>
    <property type="evidence" value="ECO:0007669"/>
    <property type="project" value="UniProtKB-UniRule"/>
</dbReference>
<dbReference type="GO" id="GO:0046872">
    <property type="term" value="F:metal ion binding"/>
    <property type="evidence" value="ECO:0007669"/>
    <property type="project" value="UniProtKB-KW"/>
</dbReference>
<dbReference type="GO" id="GO:0006163">
    <property type="term" value="P:purine nucleotide metabolic process"/>
    <property type="evidence" value="ECO:0007669"/>
    <property type="project" value="UniProtKB-UniRule"/>
</dbReference>
<dbReference type="CDD" id="cd00381">
    <property type="entry name" value="IMPDH"/>
    <property type="match status" value="1"/>
</dbReference>
<dbReference type="FunFam" id="3.20.20.70:FF:000012">
    <property type="entry name" value="GMP reductase"/>
    <property type="match status" value="1"/>
</dbReference>
<dbReference type="Gene3D" id="3.20.20.70">
    <property type="entry name" value="Aldolase class I"/>
    <property type="match status" value="1"/>
</dbReference>
<dbReference type="HAMAP" id="MF_00596">
    <property type="entry name" value="GMP_reduct_type1"/>
    <property type="match status" value="1"/>
</dbReference>
<dbReference type="InterPro" id="IPR013785">
    <property type="entry name" value="Aldolase_TIM"/>
</dbReference>
<dbReference type="InterPro" id="IPR050139">
    <property type="entry name" value="GMP_reductase"/>
</dbReference>
<dbReference type="InterPro" id="IPR005993">
    <property type="entry name" value="GMPR"/>
</dbReference>
<dbReference type="InterPro" id="IPR015875">
    <property type="entry name" value="IMP_DH/GMP_Rdtase_CS"/>
</dbReference>
<dbReference type="InterPro" id="IPR001093">
    <property type="entry name" value="IMP_DH_GMPRt"/>
</dbReference>
<dbReference type="NCBIfam" id="TIGR01305">
    <property type="entry name" value="GMP_reduct_1"/>
    <property type="match status" value="1"/>
</dbReference>
<dbReference type="NCBIfam" id="NF003470">
    <property type="entry name" value="PRK05096.1"/>
    <property type="match status" value="1"/>
</dbReference>
<dbReference type="PANTHER" id="PTHR43170">
    <property type="entry name" value="GMP REDUCTASE"/>
    <property type="match status" value="1"/>
</dbReference>
<dbReference type="PANTHER" id="PTHR43170:SF5">
    <property type="entry name" value="GMP REDUCTASE"/>
    <property type="match status" value="1"/>
</dbReference>
<dbReference type="Pfam" id="PF00478">
    <property type="entry name" value="IMPDH"/>
    <property type="match status" value="1"/>
</dbReference>
<dbReference type="PIRSF" id="PIRSF000235">
    <property type="entry name" value="GMP_reductase"/>
    <property type="match status" value="1"/>
</dbReference>
<dbReference type="SMART" id="SM01240">
    <property type="entry name" value="IMPDH"/>
    <property type="match status" value="1"/>
</dbReference>
<dbReference type="SUPFAM" id="SSF51412">
    <property type="entry name" value="Inosine monophosphate dehydrogenase (IMPDH)"/>
    <property type="match status" value="1"/>
</dbReference>
<dbReference type="PROSITE" id="PS00487">
    <property type="entry name" value="IMP_DH_GMP_RED"/>
    <property type="match status" value="1"/>
</dbReference>
<comment type="function">
    <text evidence="1">Catalyzes the irreversible NADPH-dependent deamination of GMP to IMP. It functions in the conversion of nucleobase, nucleoside and nucleotide derivatives of G to A nucleotides, and in maintaining the intracellular balance of A and G nucleotides.</text>
</comment>
<comment type="catalytic activity">
    <reaction evidence="1">
        <text>IMP + NH4(+) + NADP(+) = GMP + NADPH + 2 H(+)</text>
        <dbReference type="Rhea" id="RHEA:17185"/>
        <dbReference type="ChEBI" id="CHEBI:15378"/>
        <dbReference type="ChEBI" id="CHEBI:28938"/>
        <dbReference type="ChEBI" id="CHEBI:57783"/>
        <dbReference type="ChEBI" id="CHEBI:58053"/>
        <dbReference type="ChEBI" id="CHEBI:58115"/>
        <dbReference type="ChEBI" id="CHEBI:58349"/>
        <dbReference type="EC" id="1.7.1.7"/>
    </reaction>
</comment>
<comment type="subunit">
    <text evidence="1">Homotetramer.</text>
</comment>
<comment type="similarity">
    <text evidence="1">Belongs to the IMPDH/GMPR family. GuaC type 1 subfamily.</text>
</comment>